<evidence type="ECO:0000250" key="1"/>
<evidence type="ECO:0000256" key="2">
    <source>
        <dbReference type="SAM" id="MobiDB-lite"/>
    </source>
</evidence>
<evidence type="ECO:0000305" key="3"/>
<accession>Q6NRF1</accession>
<proteinExistence type="evidence at transcript level"/>
<gene>
    <name type="primary">ppp6r3-b</name>
    <name type="synonym">pp6r3-b</name>
    <name type="synonym">saps3-b</name>
</gene>
<protein>
    <recommendedName>
        <fullName>Serine/threonine-protein phosphatase 6 regulatory subunit 3-B</fullName>
    </recommendedName>
    <alternativeName>
        <fullName>SAPS domain family member 3-B</fullName>
    </alternativeName>
</protein>
<reference key="1">
    <citation type="submission" date="2004-05" db="EMBL/GenBank/DDBJ databases">
        <authorList>
            <consortium name="NIH - Xenopus Gene Collection (XGC) project"/>
        </authorList>
    </citation>
    <scope>NUCLEOTIDE SEQUENCE [LARGE SCALE MRNA]</scope>
    <source>
        <tissue>Oocyte</tissue>
    </source>
</reference>
<organism>
    <name type="scientific">Xenopus laevis</name>
    <name type="common">African clawed frog</name>
    <dbReference type="NCBI Taxonomy" id="8355"/>
    <lineage>
        <taxon>Eukaryota</taxon>
        <taxon>Metazoa</taxon>
        <taxon>Chordata</taxon>
        <taxon>Craniata</taxon>
        <taxon>Vertebrata</taxon>
        <taxon>Euteleostomi</taxon>
        <taxon>Amphibia</taxon>
        <taxon>Batrachia</taxon>
        <taxon>Anura</taxon>
        <taxon>Pipoidea</taxon>
        <taxon>Pipidae</taxon>
        <taxon>Xenopodinae</taxon>
        <taxon>Xenopus</taxon>
        <taxon>Xenopus</taxon>
    </lineage>
</organism>
<dbReference type="EMBL" id="BC070802">
    <property type="protein sequence ID" value="AAH70802.1"/>
    <property type="molecule type" value="mRNA"/>
</dbReference>
<dbReference type="RefSeq" id="NP_001084893.1">
    <property type="nucleotide sequence ID" value="NM_001091424.1"/>
</dbReference>
<dbReference type="SMR" id="Q6NRF1"/>
<dbReference type="DNASU" id="431944"/>
<dbReference type="GeneID" id="431944"/>
<dbReference type="KEGG" id="xla:431944"/>
<dbReference type="AGR" id="Xenbase:XB-GENE-6251553"/>
<dbReference type="CTD" id="431944"/>
<dbReference type="Xenbase" id="XB-GENE-6251553">
    <property type="gene designation" value="ppp6r3.S"/>
</dbReference>
<dbReference type="OrthoDB" id="295029at2759"/>
<dbReference type="Proteomes" id="UP000186698">
    <property type="component" value="Chromosome 4S"/>
</dbReference>
<dbReference type="Bgee" id="431944">
    <property type="expression patterns" value="Expressed in blastula and 19 other cell types or tissues"/>
</dbReference>
<dbReference type="GO" id="GO:0005829">
    <property type="term" value="C:cytosol"/>
    <property type="evidence" value="ECO:0000318"/>
    <property type="project" value="GO_Central"/>
</dbReference>
<dbReference type="GO" id="GO:0005634">
    <property type="term" value="C:nucleus"/>
    <property type="evidence" value="ECO:0000318"/>
    <property type="project" value="GO_Central"/>
</dbReference>
<dbReference type="GO" id="GO:0019903">
    <property type="term" value="F:protein phosphatase binding"/>
    <property type="evidence" value="ECO:0007669"/>
    <property type="project" value="InterPro"/>
</dbReference>
<dbReference type="GO" id="GO:0019888">
    <property type="term" value="F:protein phosphatase regulator activity"/>
    <property type="evidence" value="ECO:0000318"/>
    <property type="project" value="GO_Central"/>
</dbReference>
<dbReference type="GO" id="GO:0009966">
    <property type="term" value="P:regulation of signal transduction"/>
    <property type="evidence" value="ECO:0000318"/>
    <property type="project" value="GO_Central"/>
</dbReference>
<dbReference type="InterPro" id="IPR016024">
    <property type="entry name" value="ARM-type_fold"/>
</dbReference>
<dbReference type="InterPro" id="IPR007587">
    <property type="entry name" value="SAPS"/>
</dbReference>
<dbReference type="PANTHER" id="PTHR12634:SF12">
    <property type="entry name" value="SERINE_THREONINE-PROTEIN PHOSPHATASE 6 REGULATORY SUBUNIT 3"/>
    <property type="match status" value="1"/>
</dbReference>
<dbReference type="PANTHER" id="PTHR12634">
    <property type="entry name" value="SIT4 YEAST -ASSOCIATING PROTEIN-RELATED"/>
    <property type="match status" value="1"/>
</dbReference>
<dbReference type="Pfam" id="PF04499">
    <property type="entry name" value="SAPS"/>
    <property type="match status" value="2"/>
</dbReference>
<dbReference type="SUPFAM" id="SSF48371">
    <property type="entry name" value="ARM repeat"/>
    <property type="match status" value="1"/>
</dbReference>
<comment type="function">
    <text evidence="1">Regulatory subunit of protein phosphatase 6 (PP6). May function as a scaffolding PP6 subunit (By similarity).</text>
</comment>
<comment type="similarity">
    <text evidence="3">Belongs to the SAPS family.</text>
</comment>
<name>P6R3B_XENLA</name>
<keyword id="KW-1185">Reference proteome</keyword>
<sequence length="850" mass="95438">MFWKFDLHSSSHIDTLLERDEVTLKELMDEEDILQECKAQNRKLVEFLLKSECLEDLVTFITEEPPQDMDEKIRYKYPNLSCELLTSDVSQINDRLGEDETLLKRLYAFLLNDPPLNPLLASFFSKVLSILISRKPEQIVAFLKKKDDFVNLIIKHIGTSAIMDLLLRLLTCIEPPQLRQDVLNWLNEEKIIQRLVDIVHPSQDEDRHSNASQSLCEIIRLSRDQMLQVQNSSEPDPLLATLENKEILEQLLSNIFLKEKNESAIVSAIQILLTLLETRRPAFEGHIDLCPPGVNHSVFSVNKNVLAAIQERLPSFHQLLLDPPKTGVMKTTWGILDPPVGNTRLNVIRLIASLLQTNTHTINEELIELNTMGVILDMFFKYSWNNFLHTQVEICIALILASPGDSPEHSTISEENSAGDHVLLKHLFLKCHLIDRILEAWAMNEKRQSEGGQRYGYMGHLTRIVNCIVHSIEKGPNSVLAHQLVKDLPTDAQERWETFCTSSLSETNKRNTVDLVTTRHIHSSSDDEIEFKDPGFSQDSAIQQFGFNDEKFADQDDIGNVSFDRVSDINFSLNANESANIALFEACCKERIQQFDDGGSDEEDIWEEKNISYSQETQRRSSSGSTDSEESTDSEEEETIKQGFESSTVNHEDKMEVDANEASNWTANFDIPMETAHVANLDSDGSDVWSTEEPLSSKETDWASFSQLTSPINTKESVRSSSPVEMETSTEPVDPLSVNASAQTEVTVAMDAVSDGEEEGENADQMTETVMNGSMKETLSLTVDAKTETAVFKSEEGKLTTSHDSACKYGVVENSDTAMENPPSQPSSSSQEQRISEQIALDGASANGPV</sequence>
<feature type="chain" id="PRO_0000046104" description="Serine/threonine-protein phosphatase 6 regulatory subunit 3-B">
    <location>
        <begin position="1"/>
        <end position="850"/>
    </location>
</feature>
<feature type="region of interest" description="Disordered" evidence="2">
    <location>
        <begin position="610"/>
        <end position="652"/>
    </location>
</feature>
<feature type="region of interest" description="Disordered" evidence="2">
    <location>
        <begin position="683"/>
        <end position="778"/>
    </location>
</feature>
<feature type="region of interest" description="Disordered" evidence="2">
    <location>
        <begin position="793"/>
        <end position="850"/>
    </location>
</feature>
<feature type="compositionally biased region" description="Acidic residues" evidence="2">
    <location>
        <begin position="627"/>
        <end position="638"/>
    </location>
</feature>
<feature type="compositionally biased region" description="Polar residues" evidence="2">
    <location>
        <begin position="703"/>
        <end position="731"/>
    </location>
</feature>
<feature type="compositionally biased region" description="Polar residues" evidence="2">
    <location>
        <begin position="764"/>
        <end position="778"/>
    </location>
</feature>
<feature type="compositionally biased region" description="Low complexity" evidence="2">
    <location>
        <begin position="826"/>
        <end position="839"/>
    </location>
</feature>